<reference key="1">
    <citation type="journal article" date="2006" name="Mol. Microbiol.">
        <title>Role of pathogenicity island-associated integrases in the genome plasticity of uropathogenic Escherichia coli strain 536.</title>
        <authorList>
            <person name="Hochhut B."/>
            <person name="Wilde C."/>
            <person name="Balling G."/>
            <person name="Middendorf B."/>
            <person name="Dobrindt U."/>
            <person name="Brzuszkiewicz E."/>
            <person name="Gottschalk G."/>
            <person name="Carniel E."/>
            <person name="Hacker J."/>
        </authorList>
    </citation>
    <scope>NUCLEOTIDE SEQUENCE [LARGE SCALE GENOMIC DNA]</scope>
    <source>
        <strain>536 / UPEC</strain>
    </source>
</reference>
<accession>Q0TEA4</accession>
<sequence length="244" mass="27975">MSKLDLNALNELPKVDRILALAETNAQLEKLDAEGRVAWALDNLPGEYVLSSSFGIQAAVSLHLVNQIRPDIPVILTDTGYLFPETYRFIDELTDKLKLNLKVYRATESAAWQEARYGKLWEQGVEGIEKYNDINKVEPMNRALKELNAQTWFAGLRREQSGSRANLPVLAIQRGVFKVLPIIDWDNRTIYQYLQKHGLKYHPLWDEGYLSVGDTHTTRKWEPGMAEEETRFFGLKRECGLHEG</sequence>
<evidence type="ECO:0000255" key="1">
    <source>
        <dbReference type="HAMAP-Rule" id="MF_00063"/>
    </source>
</evidence>
<keyword id="KW-0963">Cytoplasm</keyword>
<keyword id="KW-0560">Oxidoreductase</keyword>
<feature type="chain" id="PRO_1000008922" description="Phosphoadenosine 5'-phosphosulfate reductase">
    <location>
        <begin position="1"/>
        <end position="244"/>
    </location>
</feature>
<feature type="active site" description="Nucleophile; cysteine thiosulfonate intermediate" evidence="1">
    <location>
        <position position="239"/>
    </location>
</feature>
<organism>
    <name type="scientific">Escherichia coli O6:K15:H31 (strain 536 / UPEC)</name>
    <dbReference type="NCBI Taxonomy" id="362663"/>
    <lineage>
        <taxon>Bacteria</taxon>
        <taxon>Pseudomonadati</taxon>
        <taxon>Pseudomonadota</taxon>
        <taxon>Gammaproteobacteria</taxon>
        <taxon>Enterobacterales</taxon>
        <taxon>Enterobacteriaceae</taxon>
        <taxon>Escherichia</taxon>
    </lineage>
</organism>
<gene>
    <name evidence="1" type="primary">cysH</name>
    <name type="ordered locus">ECP_2736</name>
</gene>
<dbReference type="EC" id="1.8.4.8" evidence="1"/>
<dbReference type="EMBL" id="CP000247">
    <property type="protein sequence ID" value="ABG70725.1"/>
    <property type="molecule type" value="Genomic_DNA"/>
</dbReference>
<dbReference type="RefSeq" id="WP_000039862.1">
    <property type="nucleotide sequence ID" value="NC_008253.1"/>
</dbReference>
<dbReference type="SMR" id="Q0TEA4"/>
<dbReference type="GeneID" id="75172844"/>
<dbReference type="KEGG" id="ecp:ECP_2736"/>
<dbReference type="HOGENOM" id="CLU_044089_3_0_6"/>
<dbReference type="UniPathway" id="UPA00140">
    <property type="reaction ID" value="UER00206"/>
</dbReference>
<dbReference type="Proteomes" id="UP000009182">
    <property type="component" value="Chromosome"/>
</dbReference>
<dbReference type="GO" id="GO:0005737">
    <property type="term" value="C:cytoplasm"/>
    <property type="evidence" value="ECO:0007669"/>
    <property type="project" value="UniProtKB-SubCell"/>
</dbReference>
<dbReference type="GO" id="GO:0004604">
    <property type="term" value="F:phosphoadenylyl-sulfate reductase (thioredoxin) activity"/>
    <property type="evidence" value="ECO:0007669"/>
    <property type="project" value="UniProtKB-UniRule"/>
</dbReference>
<dbReference type="GO" id="GO:0070814">
    <property type="term" value="P:hydrogen sulfide biosynthetic process"/>
    <property type="evidence" value="ECO:0007669"/>
    <property type="project" value="UniProtKB-UniRule"/>
</dbReference>
<dbReference type="GO" id="GO:0019379">
    <property type="term" value="P:sulfate assimilation, phosphoadenylyl sulfate reduction by phosphoadenylyl-sulfate reductase (thioredoxin)"/>
    <property type="evidence" value="ECO:0007669"/>
    <property type="project" value="UniProtKB-UniRule"/>
</dbReference>
<dbReference type="CDD" id="cd23945">
    <property type="entry name" value="PAPS_reductase"/>
    <property type="match status" value="1"/>
</dbReference>
<dbReference type="FunFam" id="3.40.50.620:FF:000043">
    <property type="entry name" value="Phosphoadenosine phosphosulfate reductase"/>
    <property type="match status" value="1"/>
</dbReference>
<dbReference type="Gene3D" id="3.40.50.620">
    <property type="entry name" value="HUPs"/>
    <property type="match status" value="1"/>
</dbReference>
<dbReference type="HAMAP" id="MF_00063">
    <property type="entry name" value="CysH"/>
    <property type="match status" value="1"/>
</dbReference>
<dbReference type="InterPro" id="IPR004511">
    <property type="entry name" value="PAPS/APS_Rdtase"/>
</dbReference>
<dbReference type="InterPro" id="IPR002500">
    <property type="entry name" value="PAPS_reduct_dom"/>
</dbReference>
<dbReference type="InterPro" id="IPR011800">
    <property type="entry name" value="PAPS_reductase_CysH"/>
</dbReference>
<dbReference type="InterPro" id="IPR014729">
    <property type="entry name" value="Rossmann-like_a/b/a_fold"/>
</dbReference>
<dbReference type="NCBIfam" id="TIGR00434">
    <property type="entry name" value="cysH"/>
    <property type="match status" value="1"/>
</dbReference>
<dbReference type="NCBIfam" id="TIGR02057">
    <property type="entry name" value="PAPS_reductase"/>
    <property type="match status" value="1"/>
</dbReference>
<dbReference type="NCBIfam" id="NF002537">
    <property type="entry name" value="PRK02090.1"/>
    <property type="match status" value="1"/>
</dbReference>
<dbReference type="PANTHER" id="PTHR46509">
    <property type="entry name" value="PHOSPHOADENOSINE PHOSPHOSULFATE REDUCTASE"/>
    <property type="match status" value="1"/>
</dbReference>
<dbReference type="PANTHER" id="PTHR46509:SF1">
    <property type="entry name" value="PHOSPHOADENOSINE PHOSPHOSULFATE REDUCTASE"/>
    <property type="match status" value="1"/>
</dbReference>
<dbReference type="Pfam" id="PF01507">
    <property type="entry name" value="PAPS_reduct"/>
    <property type="match status" value="1"/>
</dbReference>
<dbReference type="PIRSF" id="PIRSF000857">
    <property type="entry name" value="PAPS_reductase"/>
    <property type="match status" value="1"/>
</dbReference>
<dbReference type="SUPFAM" id="SSF52402">
    <property type="entry name" value="Adenine nucleotide alpha hydrolases-like"/>
    <property type="match status" value="1"/>
</dbReference>
<name>CYSH_ECOL5</name>
<protein>
    <recommendedName>
        <fullName evidence="1">Phosphoadenosine 5'-phosphosulfate reductase</fullName>
        <shortName evidence="1">PAPS reductase</shortName>
        <ecNumber evidence="1">1.8.4.8</ecNumber>
    </recommendedName>
    <alternativeName>
        <fullName evidence="1">3'-phosphoadenylylsulfate reductase</fullName>
    </alternativeName>
    <alternativeName>
        <fullName evidence="1">PAPS reductase, thioredoxin dependent</fullName>
    </alternativeName>
    <alternativeName>
        <fullName evidence="1">PAPS sulfotransferase</fullName>
    </alternativeName>
    <alternativeName>
        <fullName evidence="1">PAdoPS reductase</fullName>
    </alternativeName>
</protein>
<proteinExistence type="inferred from homology"/>
<comment type="function">
    <text evidence="1">Catalyzes the formation of sulfite from phosphoadenosine 5'-phosphosulfate (PAPS) using thioredoxin as an electron donor.</text>
</comment>
<comment type="catalytic activity">
    <reaction evidence="1">
        <text>[thioredoxin]-disulfide + sulfite + adenosine 3',5'-bisphosphate + 2 H(+) = [thioredoxin]-dithiol + 3'-phosphoadenylyl sulfate</text>
        <dbReference type="Rhea" id="RHEA:11724"/>
        <dbReference type="Rhea" id="RHEA-COMP:10698"/>
        <dbReference type="Rhea" id="RHEA-COMP:10700"/>
        <dbReference type="ChEBI" id="CHEBI:15378"/>
        <dbReference type="ChEBI" id="CHEBI:17359"/>
        <dbReference type="ChEBI" id="CHEBI:29950"/>
        <dbReference type="ChEBI" id="CHEBI:50058"/>
        <dbReference type="ChEBI" id="CHEBI:58339"/>
        <dbReference type="ChEBI" id="CHEBI:58343"/>
        <dbReference type="EC" id="1.8.4.8"/>
    </reaction>
</comment>
<comment type="pathway">
    <text evidence="1">Sulfur metabolism; hydrogen sulfide biosynthesis; sulfite from sulfate: step 3/3.</text>
</comment>
<comment type="subcellular location">
    <subcellularLocation>
        <location evidence="1">Cytoplasm</location>
    </subcellularLocation>
</comment>
<comment type="similarity">
    <text evidence="1">Belongs to the PAPS reductase family. CysH subfamily.</text>
</comment>